<comment type="function">
    <text evidence="1">Is involved in NO detoxification in an aerobic process, termed nitric oxide dioxygenase (NOD) reaction that utilizes O(2) and NAD(P)H to convert NO to nitrate, which protects the bacterium from various noxious nitrogen compounds. Therefore, plays a central role in the inducible response to nitrosative stress.</text>
</comment>
<comment type="catalytic activity">
    <reaction evidence="1">
        <text>2 nitric oxide + NADPH + 2 O2 = 2 nitrate + NADP(+) + H(+)</text>
        <dbReference type="Rhea" id="RHEA:19465"/>
        <dbReference type="ChEBI" id="CHEBI:15378"/>
        <dbReference type="ChEBI" id="CHEBI:15379"/>
        <dbReference type="ChEBI" id="CHEBI:16480"/>
        <dbReference type="ChEBI" id="CHEBI:17632"/>
        <dbReference type="ChEBI" id="CHEBI:57783"/>
        <dbReference type="ChEBI" id="CHEBI:58349"/>
        <dbReference type="EC" id="1.14.12.17"/>
    </reaction>
</comment>
<comment type="catalytic activity">
    <reaction evidence="1">
        <text>2 nitric oxide + NADH + 2 O2 = 2 nitrate + NAD(+) + H(+)</text>
        <dbReference type="Rhea" id="RHEA:19469"/>
        <dbReference type="ChEBI" id="CHEBI:15378"/>
        <dbReference type="ChEBI" id="CHEBI:15379"/>
        <dbReference type="ChEBI" id="CHEBI:16480"/>
        <dbReference type="ChEBI" id="CHEBI:17632"/>
        <dbReference type="ChEBI" id="CHEBI:57540"/>
        <dbReference type="ChEBI" id="CHEBI:57945"/>
        <dbReference type="EC" id="1.14.12.17"/>
    </reaction>
</comment>
<comment type="cofactor">
    <cofactor evidence="1">
        <name>heme b</name>
        <dbReference type="ChEBI" id="CHEBI:60344"/>
    </cofactor>
    <text evidence="1">Binds 1 heme b (iron(II)-protoporphyrin IX) group per subunit.</text>
</comment>
<comment type="cofactor">
    <cofactor evidence="1">
        <name>FAD</name>
        <dbReference type="ChEBI" id="CHEBI:57692"/>
    </cofactor>
    <text evidence="1">Binds 1 FAD per subunit.</text>
</comment>
<comment type="domain">
    <text>Consists of two distinct domains; an N-terminal heme-containing oxygen-binding domain and a C-terminal reductase domain with binding sites for FAD and NAD(P)H.</text>
</comment>
<comment type="similarity">
    <text evidence="1">Belongs to the globin family. Two-domain flavohemoproteins subfamily.</text>
</comment>
<comment type="similarity">
    <text evidence="1">In the C-terminal section; belongs to the flavoprotein pyridine nucleotide cytochrome reductase family.</text>
</comment>
<name>HMP_HALH5</name>
<dbReference type="EC" id="1.14.12.17" evidence="1"/>
<dbReference type="EMBL" id="AB024563">
    <property type="protein sequence ID" value="BAA83959.1"/>
    <property type="molecule type" value="Genomic_DNA"/>
</dbReference>
<dbReference type="EMBL" id="BA000004">
    <property type="protein sequence ID" value="BAB04777.1"/>
    <property type="molecule type" value="Genomic_DNA"/>
</dbReference>
<dbReference type="PIR" id="B83782">
    <property type="entry name" value="B83782"/>
</dbReference>
<dbReference type="RefSeq" id="WP_010897228.1">
    <property type="nucleotide sequence ID" value="NC_002570.2"/>
</dbReference>
<dbReference type="SMR" id="Q9RC40"/>
<dbReference type="STRING" id="272558.gene:10726952"/>
<dbReference type="KEGG" id="bha:BH1058"/>
<dbReference type="eggNOG" id="COG1017">
    <property type="taxonomic scope" value="Bacteria"/>
</dbReference>
<dbReference type="eggNOG" id="COG1018">
    <property type="taxonomic scope" value="Bacteria"/>
</dbReference>
<dbReference type="HOGENOM" id="CLU_003827_12_0_9"/>
<dbReference type="OrthoDB" id="9801223at2"/>
<dbReference type="Proteomes" id="UP000001258">
    <property type="component" value="Chromosome"/>
</dbReference>
<dbReference type="GO" id="GO:0071949">
    <property type="term" value="F:FAD binding"/>
    <property type="evidence" value="ECO:0007669"/>
    <property type="project" value="InterPro"/>
</dbReference>
<dbReference type="GO" id="GO:0020037">
    <property type="term" value="F:heme binding"/>
    <property type="evidence" value="ECO:0007669"/>
    <property type="project" value="InterPro"/>
</dbReference>
<dbReference type="GO" id="GO:0046872">
    <property type="term" value="F:metal ion binding"/>
    <property type="evidence" value="ECO:0007669"/>
    <property type="project" value="UniProtKB-KW"/>
</dbReference>
<dbReference type="GO" id="GO:0008941">
    <property type="term" value="F:nitric oxide dioxygenase NAD(P)H activity"/>
    <property type="evidence" value="ECO:0007669"/>
    <property type="project" value="UniProtKB-UniRule"/>
</dbReference>
<dbReference type="GO" id="GO:0019825">
    <property type="term" value="F:oxygen binding"/>
    <property type="evidence" value="ECO:0007669"/>
    <property type="project" value="InterPro"/>
</dbReference>
<dbReference type="GO" id="GO:0005344">
    <property type="term" value="F:oxygen carrier activity"/>
    <property type="evidence" value="ECO:0007669"/>
    <property type="project" value="UniProtKB-UniRule"/>
</dbReference>
<dbReference type="GO" id="GO:0071500">
    <property type="term" value="P:cellular response to nitrosative stress"/>
    <property type="evidence" value="ECO:0007669"/>
    <property type="project" value="TreeGrafter"/>
</dbReference>
<dbReference type="GO" id="GO:0046210">
    <property type="term" value="P:nitric oxide catabolic process"/>
    <property type="evidence" value="ECO:0007669"/>
    <property type="project" value="TreeGrafter"/>
</dbReference>
<dbReference type="GO" id="GO:0009636">
    <property type="term" value="P:response to toxic substance"/>
    <property type="evidence" value="ECO:0007669"/>
    <property type="project" value="UniProtKB-KW"/>
</dbReference>
<dbReference type="CDD" id="cd06184">
    <property type="entry name" value="flavohem_like_fad_nad_binding"/>
    <property type="match status" value="1"/>
</dbReference>
<dbReference type="CDD" id="cd14777">
    <property type="entry name" value="Yhb1-globin-like"/>
    <property type="match status" value="1"/>
</dbReference>
<dbReference type="FunFam" id="1.10.490.10:FF:000003">
    <property type="entry name" value="Flavohemoprotein"/>
    <property type="match status" value="1"/>
</dbReference>
<dbReference type="FunFam" id="2.40.30.10:FF:000034">
    <property type="entry name" value="Flavohemoprotein"/>
    <property type="match status" value="1"/>
</dbReference>
<dbReference type="FunFam" id="3.40.50.80:FF:000010">
    <property type="entry name" value="Flavohemoprotein"/>
    <property type="match status" value="1"/>
</dbReference>
<dbReference type="Gene3D" id="1.10.490.10">
    <property type="entry name" value="Globins"/>
    <property type="match status" value="1"/>
</dbReference>
<dbReference type="Gene3D" id="3.40.50.80">
    <property type="entry name" value="Nucleotide-binding domain of ferredoxin-NADP reductase (FNR) module"/>
    <property type="match status" value="1"/>
</dbReference>
<dbReference type="Gene3D" id="2.40.30.10">
    <property type="entry name" value="Translation factors"/>
    <property type="match status" value="1"/>
</dbReference>
<dbReference type="HAMAP" id="MF_01252">
    <property type="entry name" value="Hmp"/>
    <property type="match status" value="1"/>
</dbReference>
<dbReference type="InterPro" id="IPR008333">
    <property type="entry name" value="Cbr1-like_FAD-bd_dom"/>
</dbReference>
<dbReference type="InterPro" id="IPR017927">
    <property type="entry name" value="FAD-bd_FR_type"/>
</dbReference>
<dbReference type="InterPro" id="IPR001709">
    <property type="entry name" value="Flavoprot_Pyr_Nucl_cyt_Rdtase"/>
</dbReference>
<dbReference type="InterPro" id="IPR039261">
    <property type="entry name" value="FNR_nucleotide-bd"/>
</dbReference>
<dbReference type="InterPro" id="IPR000971">
    <property type="entry name" value="Globin"/>
</dbReference>
<dbReference type="InterPro" id="IPR009050">
    <property type="entry name" value="Globin-like_sf"/>
</dbReference>
<dbReference type="InterPro" id="IPR012292">
    <property type="entry name" value="Globin/Proto"/>
</dbReference>
<dbReference type="InterPro" id="IPR023950">
    <property type="entry name" value="Hmp"/>
</dbReference>
<dbReference type="InterPro" id="IPR001433">
    <property type="entry name" value="OxRdtase_FAD/NAD-bd"/>
</dbReference>
<dbReference type="InterPro" id="IPR017938">
    <property type="entry name" value="Riboflavin_synthase-like_b-brl"/>
</dbReference>
<dbReference type="NCBIfam" id="NF009805">
    <property type="entry name" value="PRK13289.1"/>
    <property type="match status" value="1"/>
</dbReference>
<dbReference type="PANTHER" id="PTHR43396">
    <property type="entry name" value="FLAVOHEMOPROTEIN"/>
    <property type="match status" value="1"/>
</dbReference>
<dbReference type="PANTHER" id="PTHR43396:SF3">
    <property type="entry name" value="FLAVOHEMOPROTEIN"/>
    <property type="match status" value="1"/>
</dbReference>
<dbReference type="Pfam" id="PF00970">
    <property type="entry name" value="FAD_binding_6"/>
    <property type="match status" value="1"/>
</dbReference>
<dbReference type="Pfam" id="PF00042">
    <property type="entry name" value="Globin"/>
    <property type="match status" value="1"/>
</dbReference>
<dbReference type="Pfam" id="PF00175">
    <property type="entry name" value="NAD_binding_1"/>
    <property type="match status" value="1"/>
</dbReference>
<dbReference type="PRINTS" id="PR00406">
    <property type="entry name" value="CYTB5RDTASE"/>
</dbReference>
<dbReference type="PRINTS" id="PR00371">
    <property type="entry name" value="FPNCR"/>
</dbReference>
<dbReference type="SUPFAM" id="SSF52343">
    <property type="entry name" value="Ferredoxin reductase-like, C-terminal NADP-linked domain"/>
    <property type="match status" value="1"/>
</dbReference>
<dbReference type="SUPFAM" id="SSF46458">
    <property type="entry name" value="Globin-like"/>
    <property type="match status" value="1"/>
</dbReference>
<dbReference type="SUPFAM" id="SSF63380">
    <property type="entry name" value="Riboflavin synthase domain-like"/>
    <property type="match status" value="1"/>
</dbReference>
<dbReference type="PROSITE" id="PS51384">
    <property type="entry name" value="FAD_FR"/>
    <property type="match status" value="1"/>
</dbReference>
<dbReference type="PROSITE" id="PS01033">
    <property type="entry name" value="GLOBIN"/>
    <property type="match status" value="1"/>
</dbReference>
<proteinExistence type="inferred from homology"/>
<reference key="1">
    <citation type="journal article" date="1999" name="Extremophiles">
        <title>Genetic analysis of the chromosome of alkaliphilic Bacillus halodurans C-125.</title>
        <authorList>
            <person name="Takami H."/>
            <person name="Takaki Y."/>
            <person name="Nakasone K."/>
            <person name="Sakiyama T."/>
            <person name="Maeno G."/>
            <person name="Sasaki R."/>
            <person name="Hirama C."/>
            <person name="Fuji F."/>
            <person name="Masui N."/>
        </authorList>
    </citation>
    <scope>NUCLEOTIDE SEQUENCE [GENOMIC DNA]</scope>
    <source>
        <strain>ATCC BAA-125 / DSM 18197 / FERM 7344 / JCM 9153 / C-125</strain>
    </source>
</reference>
<reference key="2">
    <citation type="journal article" date="2000" name="Nucleic Acids Res.">
        <title>Complete genome sequence of the alkaliphilic bacterium Bacillus halodurans and genomic sequence comparison with Bacillus subtilis.</title>
        <authorList>
            <person name="Takami H."/>
            <person name="Nakasone K."/>
            <person name="Takaki Y."/>
            <person name="Maeno G."/>
            <person name="Sasaki R."/>
            <person name="Masui N."/>
            <person name="Fuji F."/>
            <person name="Hirama C."/>
            <person name="Nakamura Y."/>
            <person name="Ogasawara N."/>
            <person name="Kuhara S."/>
            <person name="Horikoshi K."/>
        </authorList>
    </citation>
    <scope>NUCLEOTIDE SEQUENCE [LARGE SCALE GENOMIC DNA]</scope>
    <source>
        <strain>ATCC BAA-125 / DSM 18197 / FERM 7344 / JCM 9153 / C-125</strain>
    </source>
</reference>
<gene>
    <name evidence="1" type="primary">hmp</name>
    <name type="ordered locus">BH1058</name>
</gene>
<sequence>MSTATLSQETKQIVKATVPILAEHGEAITKHFYKRMFSHHPELLNIFNQTHQKQGRQPQALANSIYAAAEHIDNLEAILPVVSRIAHKHRSLNIKPEQYPIVGENLLAAMREVLGDAASDDVLEAWREAYELIADVFIQVEKKMYEEASQAPGGWREFRSFVVEKKQRESATITSFYLKPEDGKALASYKPGQYITVKVTIPGHEHTHMRQYSLSDAPEKGYYRITVKREEGDGDLPPGIVSNYLHQHIHEGDVLEITAPAGDFTLQEEGERPIVFISGGVGITPLMSMFNTLMQRGVKREVIFIHAAINGFYHAMHDHLAQTASQQENVHYAVCYERPTPGDRMNPFMKKEGFIDESFLRSILHDREADFYFCGPVPFMKTIAQILKDWDVPEQQVHYEFFGPAGTLASS</sequence>
<feature type="chain" id="PRO_0000052422" description="Flavohemoprotein">
    <location>
        <begin position="1"/>
        <end position="411"/>
    </location>
</feature>
<feature type="domain" description="Globin" evidence="2">
    <location>
        <begin position="5"/>
        <end position="142"/>
    </location>
</feature>
<feature type="domain" description="FAD-binding FR-type" evidence="1">
    <location>
        <begin position="156"/>
        <end position="267"/>
    </location>
</feature>
<feature type="region of interest" description="Reductase">
    <location>
        <begin position="153"/>
        <end position="411"/>
    </location>
</feature>
<feature type="active site" description="Charge relay system" evidence="1">
    <location>
        <position position="99"/>
    </location>
</feature>
<feature type="active site" description="Charge relay system" evidence="1">
    <location>
        <position position="141"/>
    </location>
</feature>
<feature type="binding site" description="proximal binding residue" evidence="1">
    <location>
        <position position="89"/>
    </location>
    <ligand>
        <name>heme b</name>
        <dbReference type="ChEBI" id="CHEBI:60344"/>
    </ligand>
    <ligandPart>
        <name>Fe</name>
        <dbReference type="ChEBI" id="CHEBI:18248"/>
    </ligandPart>
</feature>
<feature type="binding site" evidence="1">
    <location>
        <position position="194"/>
    </location>
    <ligand>
        <name>FAD</name>
        <dbReference type="ChEBI" id="CHEBI:57692"/>
    </ligand>
</feature>
<feature type="binding site" evidence="1">
    <location>
        <begin position="210"/>
        <end position="213"/>
    </location>
    <ligand>
        <name>FAD</name>
        <dbReference type="ChEBI" id="CHEBI:57692"/>
    </ligand>
</feature>
<feature type="binding site" evidence="1">
    <location>
        <begin position="280"/>
        <end position="285"/>
    </location>
    <ligand>
        <name>NADP(+)</name>
        <dbReference type="ChEBI" id="CHEBI:58349"/>
    </ligand>
</feature>
<feature type="binding site" evidence="1">
    <location>
        <begin position="401"/>
        <end position="404"/>
    </location>
    <ligand>
        <name>FAD</name>
        <dbReference type="ChEBI" id="CHEBI:57692"/>
    </ligand>
</feature>
<feature type="site" description="Involved in heme-bound ligand stabilization and O-O bond activation" evidence="1">
    <location>
        <position position="33"/>
    </location>
</feature>
<feature type="site" description="Influences the redox potential of the prosthetic heme and FAD groups" evidence="1">
    <location>
        <position position="88"/>
    </location>
</feature>
<feature type="site" description="Influences the redox potential of the prosthetic heme and FAD groups" evidence="1">
    <location>
        <position position="400"/>
    </location>
</feature>
<keyword id="KW-0216">Detoxification</keyword>
<keyword id="KW-0274">FAD</keyword>
<keyword id="KW-0285">Flavoprotein</keyword>
<keyword id="KW-0349">Heme</keyword>
<keyword id="KW-0408">Iron</keyword>
<keyword id="KW-0479">Metal-binding</keyword>
<keyword id="KW-0520">NAD</keyword>
<keyword id="KW-0521">NADP</keyword>
<keyword id="KW-0560">Oxidoreductase</keyword>
<keyword id="KW-0561">Oxygen transport</keyword>
<keyword id="KW-1185">Reference proteome</keyword>
<keyword id="KW-0813">Transport</keyword>
<organism>
    <name type="scientific">Halalkalibacterium halodurans (strain ATCC BAA-125 / DSM 18197 / FERM 7344 / JCM 9153 / C-125)</name>
    <name type="common">Bacillus halodurans</name>
    <dbReference type="NCBI Taxonomy" id="272558"/>
    <lineage>
        <taxon>Bacteria</taxon>
        <taxon>Bacillati</taxon>
        <taxon>Bacillota</taxon>
        <taxon>Bacilli</taxon>
        <taxon>Bacillales</taxon>
        <taxon>Bacillaceae</taxon>
        <taxon>Halalkalibacterium (ex Joshi et al. 2022)</taxon>
    </lineage>
</organism>
<evidence type="ECO:0000255" key="1">
    <source>
        <dbReference type="HAMAP-Rule" id="MF_01252"/>
    </source>
</evidence>
<evidence type="ECO:0000255" key="2">
    <source>
        <dbReference type="PROSITE-ProRule" id="PRU00238"/>
    </source>
</evidence>
<protein>
    <recommendedName>
        <fullName evidence="1">Flavohemoprotein</fullName>
    </recommendedName>
    <alternativeName>
        <fullName evidence="1">Flavohemoglobin</fullName>
    </alternativeName>
    <alternativeName>
        <fullName evidence="1">Hemoglobin-like protein</fullName>
    </alternativeName>
    <alternativeName>
        <fullName evidence="1">Nitric oxide dioxygenase</fullName>
        <shortName evidence="1">NO oxygenase</shortName>
        <shortName evidence="1">NOD</shortName>
        <ecNumber evidence="1">1.14.12.17</ecNumber>
    </alternativeName>
</protein>
<accession>Q9RC40</accession>